<keyword id="KW-0687">Ribonucleoprotein</keyword>
<keyword id="KW-0689">Ribosomal protein</keyword>
<keyword id="KW-0694">RNA-binding</keyword>
<keyword id="KW-0699">rRNA-binding</keyword>
<organism>
    <name type="scientific">Salmonella paratyphi A (strain ATCC 9150 / SARB42)</name>
    <dbReference type="NCBI Taxonomy" id="295319"/>
    <lineage>
        <taxon>Bacteria</taxon>
        <taxon>Pseudomonadati</taxon>
        <taxon>Pseudomonadota</taxon>
        <taxon>Gammaproteobacteria</taxon>
        <taxon>Enterobacterales</taxon>
        <taxon>Enterobacteriaceae</taxon>
        <taxon>Salmonella</taxon>
    </lineage>
</organism>
<evidence type="ECO:0000255" key="1">
    <source>
        <dbReference type="HAMAP-Rule" id="MF_01336"/>
    </source>
</evidence>
<evidence type="ECO:0000305" key="2"/>
<comment type="function">
    <text evidence="1">This is one of the proteins that binds to the 5S RNA in the ribosome where it forms part of the central protuberance.</text>
</comment>
<comment type="subunit">
    <text evidence="1">Part of the 50S ribosomal subunit; part of the 5S rRNA/L5/L18/L25 subcomplex. Contacts the 5S rRNA. Binds to the 5S rRNA independently of L5 and L18.</text>
</comment>
<comment type="similarity">
    <text evidence="1">Belongs to the bacterial ribosomal protein bL25 family.</text>
</comment>
<reference key="1">
    <citation type="journal article" date="2004" name="Nat. Genet.">
        <title>Comparison of genome degradation in Paratyphi A and Typhi, human-restricted serovars of Salmonella enterica that cause typhoid.</title>
        <authorList>
            <person name="McClelland M."/>
            <person name="Sanderson K.E."/>
            <person name="Clifton S.W."/>
            <person name="Latreille P."/>
            <person name="Porwollik S."/>
            <person name="Sabo A."/>
            <person name="Meyer R."/>
            <person name="Bieri T."/>
            <person name="Ozersky P."/>
            <person name="McLellan M."/>
            <person name="Harkins C.R."/>
            <person name="Wang C."/>
            <person name="Nguyen C."/>
            <person name="Berghoff A."/>
            <person name="Elliott G."/>
            <person name="Kohlberg S."/>
            <person name="Strong C."/>
            <person name="Du F."/>
            <person name="Carter J."/>
            <person name="Kremizki C."/>
            <person name="Layman D."/>
            <person name="Leonard S."/>
            <person name="Sun H."/>
            <person name="Fulton L."/>
            <person name="Nash W."/>
            <person name="Miner T."/>
            <person name="Minx P."/>
            <person name="Delehaunty K."/>
            <person name="Fronick C."/>
            <person name="Magrini V."/>
            <person name="Nhan M."/>
            <person name="Warren W."/>
            <person name="Florea L."/>
            <person name="Spieth J."/>
            <person name="Wilson R.K."/>
        </authorList>
    </citation>
    <scope>NUCLEOTIDE SEQUENCE [LARGE SCALE GENOMIC DNA]</scope>
    <source>
        <strain>ATCC 9150 / SARB42</strain>
    </source>
</reference>
<accession>Q5PE20</accession>
<proteinExistence type="inferred from homology"/>
<sequence>MFTINAEVRKEQGKGASRRLRAANKFPAIIYGGSEAPIAIELDHDQVMNMQAKAEFYSEVLTLVVDGKEVKVKAQAVQRHAYKPKLTHIDFVRA</sequence>
<dbReference type="EMBL" id="CP000026">
    <property type="protein sequence ID" value="AAV76626.1"/>
    <property type="molecule type" value="Genomic_DNA"/>
</dbReference>
<dbReference type="RefSeq" id="WP_000494192.1">
    <property type="nucleotide sequence ID" value="NC_006511.1"/>
</dbReference>
<dbReference type="SMR" id="Q5PE20"/>
<dbReference type="KEGG" id="spt:SPA0626"/>
<dbReference type="HOGENOM" id="CLU_137946_0_0_6"/>
<dbReference type="Proteomes" id="UP000008185">
    <property type="component" value="Chromosome"/>
</dbReference>
<dbReference type="GO" id="GO:0022625">
    <property type="term" value="C:cytosolic large ribosomal subunit"/>
    <property type="evidence" value="ECO:0007669"/>
    <property type="project" value="TreeGrafter"/>
</dbReference>
<dbReference type="GO" id="GO:0008097">
    <property type="term" value="F:5S rRNA binding"/>
    <property type="evidence" value="ECO:0007669"/>
    <property type="project" value="InterPro"/>
</dbReference>
<dbReference type="GO" id="GO:0003735">
    <property type="term" value="F:structural constituent of ribosome"/>
    <property type="evidence" value="ECO:0007669"/>
    <property type="project" value="InterPro"/>
</dbReference>
<dbReference type="GO" id="GO:0006412">
    <property type="term" value="P:translation"/>
    <property type="evidence" value="ECO:0007669"/>
    <property type="project" value="UniProtKB-UniRule"/>
</dbReference>
<dbReference type="CDD" id="cd00495">
    <property type="entry name" value="Ribosomal_L25_TL5_CTC"/>
    <property type="match status" value="1"/>
</dbReference>
<dbReference type="FunFam" id="2.40.240.10:FF:000002">
    <property type="entry name" value="50S ribosomal protein L25"/>
    <property type="match status" value="1"/>
</dbReference>
<dbReference type="Gene3D" id="2.40.240.10">
    <property type="entry name" value="Ribosomal Protein L25, Chain P"/>
    <property type="match status" value="1"/>
</dbReference>
<dbReference type="HAMAP" id="MF_01336">
    <property type="entry name" value="Ribosomal_bL25"/>
    <property type="match status" value="1"/>
</dbReference>
<dbReference type="InterPro" id="IPR020056">
    <property type="entry name" value="Rbsml_bL25/Gln-tRNA_synth_N"/>
</dbReference>
<dbReference type="InterPro" id="IPR011035">
    <property type="entry name" value="Ribosomal_bL25/Gln-tRNA_synth"/>
</dbReference>
<dbReference type="InterPro" id="IPR020055">
    <property type="entry name" value="Ribosomal_bL25_short"/>
</dbReference>
<dbReference type="InterPro" id="IPR029751">
    <property type="entry name" value="Ribosomal_L25_dom"/>
</dbReference>
<dbReference type="InterPro" id="IPR020930">
    <property type="entry name" value="Ribosomal_uL5_bac-type"/>
</dbReference>
<dbReference type="NCBIfam" id="NF004612">
    <property type="entry name" value="PRK05943.1"/>
    <property type="match status" value="1"/>
</dbReference>
<dbReference type="PANTHER" id="PTHR33284">
    <property type="entry name" value="RIBOSOMAL PROTEIN L25/GLN-TRNA SYNTHETASE, ANTI-CODON-BINDING DOMAIN-CONTAINING PROTEIN"/>
    <property type="match status" value="1"/>
</dbReference>
<dbReference type="PANTHER" id="PTHR33284:SF1">
    <property type="entry name" value="RIBOSOMAL PROTEIN L25_GLN-TRNA SYNTHETASE, ANTI-CODON-BINDING DOMAIN-CONTAINING PROTEIN"/>
    <property type="match status" value="1"/>
</dbReference>
<dbReference type="Pfam" id="PF01386">
    <property type="entry name" value="Ribosomal_L25p"/>
    <property type="match status" value="1"/>
</dbReference>
<dbReference type="SUPFAM" id="SSF50715">
    <property type="entry name" value="Ribosomal protein L25-like"/>
    <property type="match status" value="1"/>
</dbReference>
<feature type="chain" id="PRO_0000181491" description="Large ribosomal subunit protein bL25">
    <location>
        <begin position="1"/>
        <end position="94"/>
    </location>
</feature>
<gene>
    <name evidence="1" type="primary">rplY</name>
    <name type="ordered locus">SPA0626</name>
</gene>
<protein>
    <recommendedName>
        <fullName evidence="1">Large ribosomal subunit protein bL25</fullName>
    </recommendedName>
    <alternativeName>
        <fullName evidence="2">50S ribosomal protein L25</fullName>
    </alternativeName>
</protein>
<name>RL25_SALPA</name>